<dbReference type="EMBL" id="AB014089">
    <property type="protein sequence ID" value="BAA77755.1"/>
    <property type="molecule type" value="mRNA"/>
</dbReference>
<dbReference type="EMBL" id="AJ312746">
    <property type="protein sequence ID" value="CAC84763.1"/>
    <property type="molecule type" value="mRNA"/>
</dbReference>
<dbReference type="EMBL" id="AF377866">
    <property type="protein sequence ID" value="AAL12892.1"/>
    <property type="molecule type" value="mRNA"/>
</dbReference>
<dbReference type="EMBL" id="BC062022">
    <property type="protein sequence ID" value="AAH62022.1"/>
    <property type="molecule type" value="mRNA"/>
</dbReference>
<dbReference type="RefSeq" id="NP_112616.2">
    <molecule id="Q91ZW1-1"/>
    <property type="nucleotide sequence ID" value="NM_031326.2"/>
</dbReference>
<dbReference type="SMR" id="Q91ZW1"/>
<dbReference type="FunCoup" id="Q91ZW1">
    <property type="interactions" value="3683"/>
</dbReference>
<dbReference type="STRING" id="10116.ENSRNOP00000000753"/>
<dbReference type="PhosphoSitePlus" id="Q91ZW1"/>
<dbReference type="PaxDb" id="10116-ENSRNOP00000000753"/>
<dbReference type="Ensembl" id="ENSRNOT00000000753.5">
    <molecule id="Q91ZW1-1"/>
    <property type="protein sequence ID" value="ENSRNOP00000000753.2"/>
    <property type="gene ID" value="ENSRNOG00000000613.7"/>
</dbReference>
<dbReference type="GeneID" id="83474"/>
<dbReference type="KEGG" id="rno:83474"/>
<dbReference type="UCSC" id="RGD:620682">
    <molecule id="Q91ZW1-1"/>
    <property type="organism name" value="rat"/>
</dbReference>
<dbReference type="AGR" id="RGD:620682"/>
<dbReference type="CTD" id="7019"/>
<dbReference type="RGD" id="620682">
    <property type="gene designation" value="Tfam"/>
</dbReference>
<dbReference type="eggNOG" id="KOG0381">
    <property type="taxonomic scope" value="Eukaryota"/>
</dbReference>
<dbReference type="GeneTree" id="ENSGT00440000039001"/>
<dbReference type="HOGENOM" id="CLU_083132_0_0_1"/>
<dbReference type="InParanoid" id="Q91ZW1"/>
<dbReference type="OMA" id="YMQLAED"/>
<dbReference type="OrthoDB" id="5550281at2759"/>
<dbReference type="PhylomeDB" id="Q91ZW1"/>
<dbReference type="TreeFam" id="TF318343"/>
<dbReference type="Reactome" id="R-RNO-163282">
    <property type="pathway name" value="Mitochondrial transcription initiation"/>
</dbReference>
<dbReference type="Reactome" id="R-RNO-9837999">
    <property type="pathway name" value="Mitochondrial protein degradation"/>
</dbReference>
<dbReference type="PRO" id="PR:Q91ZW1"/>
<dbReference type="Proteomes" id="UP000002494">
    <property type="component" value="Chromosome 20"/>
</dbReference>
<dbReference type="Bgee" id="ENSRNOG00000000613">
    <property type="expression patterns" value="Expressed in quadriceps femoris and 20 other cell types or tissues"/>
</dbReference>
<dbReference type="GO" id="GO:0005829">
    <property type="term" value="C:cytosol"/>
    <property type="evidence" value="ECO:0000304"/>
    <property type="project" value="Reactome"/>
</dbReference>
<dbReference type="GO" id="GO:0005759">
    <property type="term" value="C:mitochondrial matrix"/>
    <property type="evidence" value="ECO:0000314"/>
    <property type="project" value="FlyBase"/>
</dbReference>
<dbReference type="GO" id="GO:0042645">
    <property type="term" value="C:mitochondrial nucleoid"/>
    <property type="evidence" value="ECO:0000250"/>
    <property type="project" value="UniProtKB"/>
</dbReference>
<dbReference type="GO" id="GO:0005739">
    <property type="term" value="C:mitochondrion"/>
    <property type="evidence" value="ECO:0000266"/>
    <property type="project" value="RGD"/>
</dbReference>
<dbReference type="GO" id="GO:0005634">
    <property type="term" value="C:nucleus"/>
    <property type="evidence" value="ECO:0007669"/>
    <property type="project" value="UniProtKB-SubCell"/>
</dbReference>
<dbReference type="GO" id="GO:0032991">
    <property type="term" value="C:protein-containing complex"/>
    <property type="evidence" value="ECO:0000266"/>
    <property type="project" value="RGD"/>
</dbReference>
<dbReference type="GO" id="GO:0003682">
    <property type="term" value="F:chromatin binding"/>
    <property type="evidence" value="ECO:0000250"/>
    <property type="project" value="UniProtKB"/>
</dbReference>
<dbReference type="GO" id="GO:0008301">
    <property type="term" value="F:DNA binding, bending"/>
    <property type="evidence" value="ECO:0000318"/>
    <property type="project" value="GO_Central"/>
</dbReference>
<dbReference type="GO" id="GO:0031072">
    <property type="term" value="F:heat shock protein binding"/>
    <property type="evidence" value="ECO:0000353"/>
    <property type="project" value="RGD"/>
</dbReference>
<dbReference type="GO" id="GO:0001018">
    <property type="term" value="F:mitochondrial promoter sequence-specific DNA binding"/>
    <property type="evidence" value="ECO:0000250"/>
    <property type="project" value="UniProtKB"/>
</dbReference>
<dbReference type="GO" id="GO:0034246">
    <property type="term" value="F:mitochondrial transcription factor activity"/>
    <property type="evidence" value="ECO:0000266"/>
    <property type="project" value="RGD"/>
</dbReference>
<dbReference type="GO" id="GO:0043565">
    <property type="term" value="F:sequence-specific DNA binding"/>
    <property type="evidence" value="ECO:0000266"/>
    <property type="project" value="RGD"/>
</dbReference>
<dbReference type="GO" id="GO:0000976">
    <property type="term" value="F:transcription cis-regulatory region binding"/>
    <property type="evidence" value="ECO:0000318"/>
    <property type="project" value="GO_Central"/>
</dbReference>
<dbReference type="GO" id="GO:0001223">
    <property type="term" value="F:transcription coactivator binding"/>
    <property type="evidence" value="ECO:0000353"/>
    <property type="project" value="RGD"/>
</dbReference>
<dbReference type="GO" id="GO:0033108">
    <property type="term" value="P:mitochondrial respiratory chain complex assembly"/>
    <property type="evidence" value="ECO:0000266"/>
    <property type="project" value="RGD"/>
</dbReference>
<dbReference type="GO" id="GO:0006390">
    <property type="term" value="P:mitochondrial transcription"/>
    <property type="evidence" value="ECO:0000266"/>
    <property type="project" value="RGD"/>
</dbReference>
<dbReference type="GO" id="GO:0045893">
    <property type="term" value="P:positive regulation of DNA-templated transcription"/>
    <property type="evidence" value="ECO:0000250"/>
    <property type="project" value="UniProtKB"/>
</dbReference>
<dbReference type="GO" id="GO:0006357">
    <property type="term" value="P:regulation of transcription by RNA polymerase II"/>
    <property type="evidence" value="ECO:0000318"/>
    <property type="project" value="GO_Central"/>
</dbReference>
<dbReference type="GO" id="GO:0001666">
    <property type="term" value="P:response to hypoxia"/>
    <property type="evidence" value="ECO:0000270"/>
    <property type="project" value="RGD"/>
</dbReference>
<dbReference type="GO" id="GO:0007584">
    <property type="term" value="P:response to nutrient"/>
    <property type="evidence" value="ECO:0000270"/>
    <property type="project" value="RGD"/>
</dbReference>
<dbReference type="GO" id="GO:0006391">
    <property type="term" value="P:transcription initiation at mitochondrial promoter"/>
    <property type="evidence" value="ECO:0000250"/>
    <property type="project" value="UniProtKB"/>
</dbReference>
<dbReference type="FunFam" id="1.10.30.10:FF:000043">
    <property type="entry name" value="Transcription factor A, mitochondrial"/>
    <property type="match status" value="1"/>
</dbReference>
<dbReference type="Gene3D" id="1.10.30.10">
    <property type="entry name" value="High mobility group box domain"/>
    <property type="match status" value="2"/>
</dbReference>
<dbReference type="InterPro" id="IPR009071">
    <property type="entry name" value="HMG_box_dom"/>
</dbReference>
<dbReference type="InterPro" id="IPR036910">
    <property type="entry name" value="HMG_box_dom_sf"/>
</dbReference>
<dbReference type="InterPro" id="IPR050342">
    <property type="entry name" value="HMGB"/>
</dbReference>
<dbReference type="PANTHER" id="PTHR48112">
    <property type="entry name" value="HIGH MOBILITY GROUP PROTEIN DSP1"/>
    <property type="match status" value="1"/>
</dbReference>
<dbReference type="PANTHER" id="PTHR48112:SF36">
    <property type="entry name" value="TRANSCRIPTION FACTOR A, MITOCHONDRIAL"/>
    <property type="match status" value="1"/>
</dbReference>
<dbReference type="Pfam" id="PF00505">
    <property type="entry name" value="HMG_box"/>
    <property type="match status" value="1"/>
</dbReference>
<dbReference type="Pfam" id="PF09011">
    <property type="entry name" value="HMG_box_2"/>
    <property type="match status" value="1"/>
</dbReference>
<dbReference type="SMART" id="SM00398">
    <property type="entry name" value="HMG"/>
    <property type="match status" value="2"/>
</dbReference>
<dbReference type="SUPFAM" id="SSF47095">
    <property type="entry name" value="HMG-box"/>
    <property type="match status" value="2"/>
</dbReference>
<dbReference type="PROSITE" id="PS50118">
    <property type="entry name" value="HMG_BOX_2"/>
    <property type="match status" value="2"/>
</dbReference>
<sequence length="244" mass="28187">MALFRGMWGVLRTLGRTGVEMCAGCGGRIPSPVSLICIPKCFSSLGNYPKKPMSSYLRFSTEQLPKFKAKHPDAKVSELIRKIAAMWRELPEAEKKVYEADFKAEWKVYKEAVSKYKEQLTPSQLMGLEKEARQKRLKKKAQIKRRELILLGKPKRPRSAYNIYVSESFQEAKDESAQGKLKLVNQAWKNLSHDEKQAYIQLAKDDRIRYDNEMKSWEEQMAEVGRSDLIRRSVKRPPGDISEN</sequence>
<accession>Q91ZW1</accession>
<accession>Q9WTM7</accession>
<evidence type="ECO:0000250" key="1"/>
<evidence type="ECO:0000250" key="2">
    <source>
        <dbReference type="UniProtKB" id="P40630"/>
    </source>
</evidence>
<evidence type="ECO:0000250" key="3">
    <source>
        <dbReference type="UniProtKB" id="Q00059"/>
    </source>
</evidence>
<evidence type="ECO:0000255" key="4"/>
<evidence type="ECO:0000255" key="5">
    <source>
        <dbReference type="PROSITE-ProRule" id="PRU00267"/>
    </source>
</evidence>
<evidence type="ECO:0000256" key="6">
    <source>
        <dbReference type="SAM" id="MobiDB-lite"/>
    </source>
</evidence>
<evidence type="ECO:0000305" key="7"/>
<evidence type="ECO:0000312" key="8">
    <source>
        <dbReference type="RGD" id="620682"/>
    </source>
</evidence>
<protein>
    <recommendedName>
        <fullName evidence="7">Transcription factor A, mitochondrial</fullName>
        <shortName>mtTFA</shortName>
    </recommendedName>
</protein>
<proteinExistence type="evidence at transcript level"/>
<reference key="1">
    <citation type="journal article" date="2000" name="DNA Seq.">
        <title>Isolation of rat mitochondrial transcription factor A (r-Tfam) cDNA.</title>
        <authorList>
            <person name="Inagaki H."/>
            <person name="Hayashi T."/>
            <person name="Matsushima Y."/>
            <person name="Lin K.H."/>
            <person name="Maeda S."/>
            <person name="Ichihara S."/>
            <person name="Hitagawa Y."/>
            <person name="Saito T."/>
        </authorList>
    </citation>
    <scope>NUCLEOTIDE SEQUENCE [MRNA]</scope>
    <scope>ALTERNATIVE SPLICING</scope>
    <source>
        <strain>Sprague-Dawley</strain>
        <tissue>Brain</tissue>
    </source>
</reference>
<reference key="2">
    <citation type="journal article" date="2002" name="Gene">
        <title>Characterization of the mtTFA gene and identification of a processed pseudogene in rat.</title>
        <authorList>
            <person name="Mezzina M."/>
            <person name="Reyes A."/>
            <person name="D'Errico I."/>
            <person name="Gadaleta G."/>
        </authorList>
    </citation>
    <scope>NUCLEOTIDE SEQUENCE [MRNA]</scope>
    <source>
        <strain>Sprague-Dawley</strain>
    </source>
</reference>
<reference key="3">
    <citation type="journal article" date="2002" name="J. Biol. Chem.">
        <title>Mitochondrial transcription factor A and its downstream targets are up-regulated in a rat hepatoma.</title>
        <authorList>
            <person name="Dong X."/>
            <person name="Ghoshal K."/>
            <person name="Majumder S."/>
            <person name="Yadav S.P."/>
            <person name="Jacob S.T."/>
        </authorList>
    </citation>
    <scope>RETRACTED PAPER</scope>
    <source>
        <strain>ACI</strain>
    </source>
</reference>
<reference key="4">
    <citation type="journal article" date="2018" name="J. Biol. Chem.">
        <authorList>
            <person name="Dong X."/>
            <person name="Ghoshal K."/>
            <person name="Majumder S."/>
            <person name="Yadav S.P."/>
            <person name="Jacob S.T."/>
        </authorList>
    </citation>
    <scope>RETRACTION NOTICE OF PUBMED:12198131</scope>
</reference>
<reference key="5">
    <citation type="journal article" date="2004" name="Genome Res.">
        <title>The status, quality, and expansion of the NIH full-length cDNA project: the Mammalian Gene Collection (MGC).</title>
        <authorList>
            <consortium name="The MGC Project Team"/>
        </authorList>
    </citation>
    <scope>NUCLEOTIDE SEQUENCE [LARGE SCALE MRNA]</scope>
    <source>
        <tissue>Prostate</tissue>
    </source>
</reference>
<gene>
    <name evidence="8" type="primary">Tfam</name>
</gene>
<name>TFAM_RAT</name>
<keyword id="KW-0010">Activator</keyword>
<keyword id="KW-0025">Alternative splicing</keyword>
<keyword id="KW-0238">DNA-binding</keyword>
<keyword id="KW-0496">Mitochondrion</keyword>
<keyword id="KW-1135">Mitochondrion nucleoid</keyword>
<keyword id="KW-0539">Nucleus</keyword>
<keyword id="KW-0597">Phosphoprotein</keyword>
<keyword id="KW-1185">Reference proteome</keyword>
<keyword id="KW-0677">Repeat</keyword>
<keyword id="KW-0804">Transcription</keyword>
<keyword id="KW-0805">Transcription regulation</keyword>
<keyword id="KW-0809">Transit peptide</keyword>
<comment type="function">
    <molecule>Isoform Mitochondrial</molecule>
    <text evidence="3">Binds to the mitochondrial light strand promoter and functions in mitochondrial transcription regulation. Component of the mitochondrial transcription initiation complex, composed at least of TFB2M, TFAM and POLRMT that is required for basal transcription of mitochondrial DNA. In this complex, TFAM recruits POLRMT to a specific promoter whereas TFB2M induces structural changes in POLRMT to enable promoter opening and trapping of the DNA non-template strand. Required for accurate and efficient promoter recognition by the mitochondrial RNA polymerase. Promotes transcription initiation from the HSP1 and the light strand promoter by binding immediately upstream of transcriptional start sites. Is able to unwind DNA. Bends the mitochondrial light strand promoter DNA into a U-turn shape via its HMG boxes. Required for maintenance of normal levels of mitochondrial DNA. May play a role in organizing and compacting mitochondrial DNA (By similarity).</text>
</comment>
<comment type="function">
    <molecule>Isoform Nuclear</molecule>
    <text evidence="2">May also function as a transcriptional activator or may have a structural role in the compaction of nuclear DNA during spermatogenesis.</text>
</comment>
<comment type="subunit">
    <text evidence="3">Monomer; binds DNA as a monomer. Homodimer. Component of the mitochondrial transcription initiation complex, composed at least of TFB2M, TFAM and POLRMT. In this complex TFAM recruits POLRMT to the promoter whereas TFB2M induces structural changes in POLRMT to enable promoter opening and trapping of the DNA non-template strand. Upon metabolic stress, forms a complex composed of FOXO3, SIRT3, TFAM and POLRMT. Interacts with TFB1M and TFB2M. Interacts with CLPX; this enhances DNA-binding.</text>
</comment>
<comment type="subcellular location">
    <molecule>Isoform Mitochondrial</molecule>
    <subcellularLocation>
        <location evidence="3">Mitochondrion</location>
    </subcellularLocation>
    <subcellularLocation>
        <location evidence="3">Mitochondrion matrix</location>
        <location evidence="3">Mitochondrion nucleoid</location>
    </subcellularLocation>
</comment>
<comment type="subcellular location">
    <molecule>Isoform Nuclear</molecule>
    <subcellularLocation>
        <location>Nucleus</location>
    </subcellularLocation>
</comment>
<comment type="alternative products">
    <event type="alternative splicing"/>
    <isoform>
        <id>Q91ZW1-1</id>
        <name>Mitochondrial</name>
        <sequence type="displayed"/>
    </isoform>
    <isoform>
        <id>Q91ZW1-2</id>
        <name>Nuclear</name>
        <sequence type="not described"/>
    </isoform>
</comment>
<comment type="tissue specificity">
    <text>The mitochondrial isoform is widely expressed while the nuclear isoform is testis-specific.</text>
</comment>
<comment type="domain">
    <text evidence="1">Binds DNA via its HMG boxes. When bound to the mitochondrial light strand promoter, bends DNA into a U-turn shape, each HMG box bending the DNA by 90 degrees (By similarity).</text>
</comment>
<comment type="PTM">
    <text evidence="1">Phosphorylation by PKA within the HMG box 1 impairs DNA binding and promotes degradation by the AAA+ Lon protease.</text>
</comment>
<feature type="transit peptide" description="Mitochondrion" evidence="4">
    <location>
        <begin position="1"/>
        <end position="42"/>
    </location>
</feature>
<feature type="chain" id="PRO_0000013472" description="Transcription factor A, mitochondrial">
    <location>
        <begin position="43"/>
        <end position="244"/>
    </location>
</feature>
<feature type="DNA-binding region" description="HMG box 1" evidence="5">
    <location>
        <begin position="49"/>
        <end position="117"/>
    </location>
</feature>
<feature type="DNA-binding region" description="HMG box 2" evidence="5">
    <location>
        <begin position="154"/>
        <end position="218"/>
    </location>
</feature>
<feature type="region of interest" description="Disordered" evidence="6">
    <location>
        <begin position="221"/>
        <end position="244"/>
    </location>
</feature>
<feature type="site" description="Intercalates between bases and promotes DNA bending" evidence="1">
    <location>
        <position position="57"/>
    </location>
</feature>
<feature type="site" description="Intercalates between bases and promotes DNA bending" evidence="1">
    <location>
        <position position="181"/>
    </location>
</feature>
<feature type="modified residue" description="Phosphoserine; by PKA" evidence="3">
    <location>
        <position position="54"/>
    </location>
</feature>
<feature type="modified residue" description="Phosphoserine; by PKA" evidence="3">
    <location>
        <position position="55"/>
    </location>
</feature>
<feature type="modified residue" description="Phosphoserine; by PKA" evidence="3">
    <location>
        <position position="60"/>
    </location>
</feature>
<feature type="modified residue" description="N6-succinyllysine" evidence="2">
    <location>
        <position position="66"/>
    </location>
</feature>
<feature type="modified residue" description="Phosphothreonine" evidence="3">
    <location>
        <position position="121"/>
    </location>
</feature>
<feature type="modified residue" description="Phosphoserine; by PKA" evidence="3">
    <location>
        <position position="159"/>
    </location>
</feature>
<feature type="modified residue" description="Phosphoserine" evidence="3">
    <location>
        <position position="192"/>
    </location>
</feature>
<feature type="sequence conflict" description="In Ref. 1; BAA77755." evidence="7" ref="1">
    <original>E</original>
    <variation>G</variation>
    <location>
        <position position="171"/>
    </location>
</feature>
<feature type="sequence conflict" description="In Ref. 1; BAA77755." evidence="7" ref="1">
    <original>A</original>
    <variation>P</variation>
    <location>
        <position position="177"/>
    </location>
</feature>
<organism>
    <name type="scientific">Rattus norvegicus</name>
    <name type="common">Rat</name>
    <dbReference type="NCBI Taxonomy" id="10116"/>
    <lineage>
        <taxon>Eukaryota</taxon>
        <taxon>Metazoa</taxon>
        <taxon>Chordata</taxon>
        <taxon>Craniata</taxon>
        <taxon>Vertebrata</taxon>
        <taxon>Euteleostomi</taxon>
        <taxon>Mammalia</taxon>
        <taxon>Eutheria</taxon>
        <taxon>Euarchontoglires</taxon>
        <taxon>Glires</taxon>
        <taxon>Rodentia</taxon>
        <taxon>Myomorpha</taxon>
        <taxon>Muroidea</taxon>
        <taxon>Muridae</taxon>
        <taxon>Murinae</taxon>
        <taxon>Rattus</taxon>
    </lineage>
</organism>